<proteinExistence type="inferred from homology"/>
<reference key="1">
    <citation type="journal article" date="2003" name="Proc. Natl. Acad. Sci. U.S.A.">
        <title>The complete genome sequence of the carcinogenic bacterium Helicobacter hepaticus.</title>
        <authorList>
            <person name="Suerbaum S."/>
            <person name="Josenhans C."/>
            <person name="Sterzenbach T."/>
            <person name="Drescher B."/>
            <person name="Brandt P."/>
            <person name="Bell M."/>
            <person name="Droege M."/>
            <person name="Fartmann B."/>
            <person name="Fischer H.-P."/>
            <person name="Ge Z."/>
            <person name="Hoerster A."/>
            <person name="Holland R."/>
            <person name="Klein K."/>
            <person name="Koenig J."/>
            <person name="Macko L."/>
            <person name="Mendz G.L."/>
            <person name="Nyakatura G."/>
            <person name="Schauer D.B."/>
            <person name="Shen Z."/>
            <person name="Weber J."/>
            <person name="Frosch M."/>
            <person name="Fox J.G."/>
        </authorList>
    </citation>
    <scope>NUCLEOTIDE SEQUENCE [LARGE SCALE GENOMIC DNA]</scope>
    <source>
        <strain>ATCC 51449 / 3B1</strain>
    </source>
</reference>
<keyword id="KW-0004">4Fe-4S</keyword>
<keyword id="KW-0963">Cytoplasm</keyword>
<keyword id="KW-0408">Iron</keyword>
<keyword id="KW-0411">Iron-sulfur</keyword>
<keyword id="KW-0479">Metal-binding</keyword>
<keyword id="KW-1185">Reference proteome</keyword>
<keyword id="KW-0949">S-adenosyl-L-methionine</keyword>
<keyword id="KW-0808">Transferase</keyword>
<keyword id="KW-0819">tRNA processing</keyword>
<sequence>MKLFIQTLGCAMNERDSAHMIAELRDKKHYTLTNDIKQADLILINTCSVREKPEKKLFSEIGAFAKEKKAGAKIGVCGCTASHLGEEIIKKAPSVDFVLGARNVSKITQVLERPKAVEVDIDYDDSTYVFASSQGMGIKAHLNISIGCDKKCSYCIVPFTRGKEISVPKDLLISEAKKCVASGAKELLLLGQNVNNYGVRFSHSHPKTNFTQLLRALSEIDGLYRIRFTSPHPLHMDDEFLEEFASNPVIAKGIHIPLQSGSSQILKMMRRGYDKQWYLNRIAKLKSLVPNVGIGTDIIVGFPTESEQDFEDTMEVLSLVEFDTLYSFVYSPRPHTSAFEYDKSMLVSPEVAKERLARLQNLHKEILSKKAQLEIGRIHNVLIENHYNGEGQCWSEGRSSSNKLIKILDKKCEIGSIVKVEITHNEGGGLMGRFINELSLSEALASKEYFQNPIYIQEGALC</sequence>
<gene>
    <name evidence="1" type="primary">miaB</name>
    <name type="ordered locus">HH_1274</name>
</gene>
<organism>
    <name type="scientific">Helicobacter hepaticus (strain ATCC 51449 / 3B1)</name>
    <dbReference type="NCBI Taxonomy" id="235279"/>
    <lineage>
        <taxon>Bacteria</taxon>
        <taxon>Pseudomonadati</taxon>
        <taxon>Campylobacterota</taxon>
        <taxon>Epsilonproteobacteria</taxon>
        <taxon>Campylobacterales</taxon>
        <taxon>Helicobacteraceae</taxon>
        <taxon>Helicobacter</taxon>
    </lineage>
</organism>
<accession>Q7VGP6</accession>
<dbReference type="EC" id="2.8.4.3" evidence="1"/>
<dbReference type="EMBL" id="AE017125">
    <property type="protein sequence ID" value="AAP77871.1"/>
    <property type="status" value="ALT_INIT"/>
    <property type="molecule type" value="Genomic_DNA"/>
</dbReference>
<dbReference type="RefSeq" id="WP_041309105.1">
    <property type="nucleotide sequence ID" value="NC_004917.1"/>
</dbReference>
<dbReference type="SMR" id="Q7VGP6"/>
<dbReference type="STRING" id="235279.HH_1274"/>
<dbReference type="KEGG" id="hhe:HH_1274"/>
<dbReference type="eggNOG" id="COG0621">
    <property type="taxonomic scope" value="Bacteria"/>
</dbReference>
<dbReference type="HOGENOM" id="CLU_018697_2_0_7"/>
<dbReference type="OrthoDB" id="9805215at2"/>
<dbReference type="Proteomes" id="UP000002495">
    <property type="component" value="Chromosome"/>
</dbReference>
<dbReference type="GO" id="GO:0005829">
    <property type="term" value="C:cytosol"/>
    <property type="evidence" value="ECO:0007669"/>
    <property type="project" value="TreeGrafter"/>
</dbReference>
<dbReference type="GO" id="GO:0051539">
    <property type="term" value="F:4 iron, 4 sulfur cluster binding"/>
    <property type="evidence" value="ECO:0007669"/>
    <property type="project" value="UniProtKB-UniRule"/>
</dbReference>
<dbReference type="GO" id="GO:0046872">
    <property type="term" value="F:metal ion binding"/>
    <property type="evidence" value="ECO:0007669"/>
    <property type="project" value="UniProtKB-KW"/>
</dbReference>
<dbReference type="GO" id="GO:0035597">
    <property type="term" value="F:N6-isopentenyladenosine methylthiotransferase activity"/>
    <property type="evidence" value="ECO:0007669"/>
    <property type="project" value="TreeGrafter"/>
</dbReference>
<dbReference type="CDD" id="cd01335">
    <property type="entry name" value="Radical_SAM"/>
    <property type="match status" value="1"/>
</dbReference>
<dbReference type="FunFam" id="3.40.50.12160:FF:000003">
    <property type="entry name" value="CDK5 regulatory subunit-associated protein 1"/>
    <property type="match status" value="1"/>
</dbReference>
<dbReference type="FunFam" id="3.80.30.20:FF:000001">
    <property type="entry name" value="tRNA-2-methylthio-N(6)-dimethylallyladenosine synthase 2"/>
    <property type="match status" value="1"/>
</dbReference>
<dbReference type="Gene3D" id="3.40.50.12160">
    <property type="entry name" value="Methylthiotransferase, N-terminal domain"/>
    <property type="match status" value="1"/>
</dbReference>
<dbReference type="Gene3D" id="3.80.30.20">
    <property type="entry name" value="tm_1862 like domain"/>
    <property type="match status" value="1"/>
</dbReference>
<dbReference type="HAMAP" id="MF_01864">
    <property type="entry name" value="tRNA_metthiotr_MiaB"/>
    <property type="match status" value="1"/>
</dbReference>
<dbReference type="InterPro" id="IPR006638">
    <property type="entry name" value="Elp3/MiaA/NifB-like_rSAM"/>
</dbReference>
<dbReference type="InterPro" id="IPR005839">
    <property type="entry name" value="Methylthiotransferase"/>
</dbReference>
<dbReference type="InterPro" id="IPR020612">
    <property type="entry name" value="Methylthiotransferase_CS"/>
</dbReference>
<dbReference type="InterPro" id="IPR013848">
    <property type="entry name" value="Methylthiotransferase_N"/>
</dbReference>
<dbReference type="InterPro" id="IPR038135">
    <property type="entry name" value="Methylthiotransferase_N_sf"/>
</dbReference>
<dbReference type="InterPro" id="IPR006463">
    <property type="entry name" value="MiaB_methiolase"/>
</dbReference>
<dbReference type="InterPro" id="IPR007197">
    <property type="entry name" value="rSAM"/>
</dbReference>
<dbReference type="InterPro" id="IPR023404">
    <property type="entry name" value="rSAM_horseshoe"/>
</dbReference>
<dbReference type="InterPro" id="IPR002792">
    <property type="entry name" value="TRAM_dom"/>
</dbReference>
<dbReference type="NCBIfam" id="TIGR01574">
    <property type="entry name" value="miaB-methiolase"/>
    <property type="match status" value="1"/>
</dbReference>
<dbReference type="NCBIfam" id="TIGR00089">
    <property type="entry name" value="MiaB/RimO family radical SAM methylthiotransferase"/>
    <property type="match status" value="1"/>
</dbReference>
<dbReference type="PANTHER" id="PTHR43020">
    <property type="entry name" value="CDK5 REGULATORY SUBUNIT-ASSOCIATED PROTEIN 1"/>
    <property type="match status" value="1"/>
</dbReference>
<dbReference type="PANTHER" id="PTHR43020:SF2">
    <property type="entry name" value="MITOCHONDRIAL TRNA METHYLTHIOTRANSFERASE CDK5RAP1"/>
    <property type="match status" value="1"/>
</dbReference>
<dbReference type="Pfam" id="PF04055">
    <property type="entry name" value="Radical_SAM"/>
    <property type="match status" value="1"/>
</dbReference>
<dbReference type="Pfam" id="PF00919">
    <property type="entry name" value="UPF0004"/>
    <property type="match status" value="1"/>
</dbReference>
<dbReference type="SFLD" id="SFLDF00273">
    <property type="entry name" value="(dimethylallyl)adenosine_tRNA"/>
    <property type="match status" value="1"/>
</dbReference>
<dbReference type="SFLD" id="SFLDG01082">
    <property type="entry name" value="B12-binding_domain_containing"/>
    <property type="match status" value="1"/>
</dbReference>
<dbReference type="SFLD" id="SFLDG01061">
    <property type="entry name" value="methylthiotransferase"/>
    <property type="match status" value="1"/>
</dbReference>
<dbReference type="SMART" id="SM00729">
    <property type="entry name" value="Elp3"/>
    <property type="match status" value="1"/>
</dbReference>
<dbReference type="SUPFAM" id="SSF102114">
    <property type="entry name" value="Radical SAM enzymes"/>
    <property type="match status" value="1"/>
</dbReference>
<dbReference type="PROSITE" id="PS51449">
    <property type="entry name" value="MTTASE_N"/>
    <property type="match status" value="1"/>
</dbReference>
<dbReference type="PROSITE" id="PS01278">
    <property type="entry name" value="MTTASE_RADICAL"/>
    <property type="match status" value="1"/>
</dbReference>
<dbReference type="PROSITE" id="PS51918">
    <property type="entry name" value="RADICAL_SAM"/>
    <property type="match status" value="1"/>
</dbReference>
<dbReference type="PROSITE" id="PS50926">
    <property type="entry name" value="TRAM"/>
    <property type="match status" value="1"/>
</dbReference>
<protein>
    <recommendedName>
        <fullName evidence="1">tRNA-2-methylthio-N(6)-dimethylallyladenosine synthase</fullName>
        <ecNumber evidence="1">2.8.4.3</ecNumber>
    </recommendedName>
    <alternativeName>
        <fullName evidence="1">(Dimethylallyl)adenosine tRNA methylthiotransferase MiaB</fullName>
    </alternativeName>
    <alternativeName>
        <fullName evidence="1">tRNA-i(6)A37 methylthiotransferase</fullName>
    </alternativeName>
</protein>
<name>MIAB_HELHP</name>
<evidence type="ECO:0000255" key="1">
    <source>
        <dbReference type="HAMAP-Rule" id="MF_01864"/>
    </source>
</evidence>
<evidence type="ECO:0000255" key="2">
    <source>
        <dbReference type="PROSITE-ProRule" id="PRU01266"/>
    </source>
</evidence>
<evidence type="ECO:0000305" key="3"/>
<comment type="function">
    <text evidence="1">Catalyzes the methylthiolation of N6-(dimethylallyl)adenosine (i(6)A), leading to the formation of 2-methylthio-N6-(dimethylallyl)adenosine (ms(2)i(6)A) at position 37 in tRNAs that read codons beginning with uridine.</text>
</comment>
<comment type="catalytic activity">
    <reaction evidence="1">
        <text>N(6)-dimethylallyladenosine(37) in tRNA + (sulfur carrier)-SH + AH2 + 2 S-adenosyl-L-methionine = 2-methylsulfanyl-N(6)-dimethylallyladenosine(37) in tRNA + (sulfur carrier)-H + 5'-deoxyadenosine + L-methionine + A + S-adenosyl-L-homocysteine + 2 H(+)</text>
        <dbReference type="Rhea" id="RHEA:37067"/>
        <dbReference type="Rhea" id="RHEA-COMP:10375"/>
        <dbReference type="Rhea" id="RHEA-COMP:10376"/>
        <dbReference type="Rhea" id="RHEA-COMP:14737"/>
        <dbReference type="Rhea" id="RHEA-COMP:14739"/>
        <dbReference type="ChEBI" id="CHEBI:13193"/>
        <dbReference type="ChEBI" id="CHEBI:15378"/>
        <dbReference type="ChEBI" id="CHEBI:17319"/>
        <dbReference type="ChEBI" id="CHEBI:17499"/>
        <dbReference type="ChEBI" id="CHEBI:29917"/>
        <dbReference type="ChEBI" id="CHEBI:57844"/>
        <dbReference type="ChEBI" id="CHEBI:57856"/>
        <dbReference type="ChEBI" id="CHEBI:59789"/>
        <dbReference type="ChEBI" id="CHEBI:64428"/>
        <dbReference type="ChEBI" id="CHEBI:74415"/>
        <dbReference type="ChEBI" id="CHEBI:74417"/>
        <dbReference type="EC" id="2.8.4.3"/>
    </reaction>
</comment>
<comment type="cofactor">
    <cofactor evidence="1">
        <name>[4Fe-4S] cluster</name>
        <dbReference type="ChEBI" id="CHEBI:49883"/>
    </cofactor>
    <text evidence="1">Binds 2 [4Fe-4S] clusters. One cluster is coordinated with 3 cysteines and an exchangeable S-adenosyl-L-methionine.</text>
</comment>
<comment type="subunit">
    <text evidence="1">Monomer.</text>
</comment>
<comment type="subcellular location">
    <subcellularLocation>
        <location evidence="1">Cytoplasm</location>
    </subcellularLocation>
</comment>
<comment type="similarity">
    <text evidence="1">Belongs to the methylthiotransferase family. MiaB subfamily.</text>
</comment>
<comment type="sequence caution" evidence="3">
    <conflict type="erroneous initiation">
        <sequence resource="EMBL-CDS" id="AAP77871"/>
    </conflict>
</comment>
<feature type="chain" id="PRO_0000374336" description="tRNA-2-methylthio-N(6)-dimethylallyladenosine synthase">
    <location>
        <begin position="1"/>
        <end position="462"/>
    </location>
</feature>
<feature type="domain" description="MTTase N-terminal" evidence="1">
    <location>
        <begin position="1"/>
        <end position="116"/>
    </location>
</feature>
<feature type="domain" description="Radical SAM core" evidence="2">
    <location>
        <begin position="134"/>
        <end position="370"/>
    </location>
</feature>
<feature type="domain" description="TRAM" evidence="1">
    <location>
        <begin position="372"/>
        <end position="436"/>
    </location>
</feature>
<feature type="binding site" evidence="1">
    <location>
        <position position="10"/>
    </location>
    <ligand>
        <name>[4Fe-4S] cluster</name>
        <dbReference type="ChEBI" id="CHEBI:49883"/>
        <label>1</label>
    </ligand>
</feature>
<feature type="binding site" evidence="1">
    <location>
        <position position="47"/>
    </location>
    <ligand>
        <name>[4Fe-4S] cluster</name>
        <dbReference type="ChEBI" id="CHEBI:49883"/>
        <label>1</label>
    </ligand>
</feature>
<feature type="binding site" evidence="1">
    <location>
        <position position="79"/>
    </location>
    <ligand>
        <name>[4Fe-4S] cluster</name>
        <dbReference type="ChEBI" id="CHEBI:49883"/>
        <label>1</label>
    </ligand>
</feature>
<feature type="binding site" evidence="1">
    <location>
        <position position="148"/>
    </location>
    <ligand>
        <name>[4Fe-4S] cluster</name>
        <dbReference type="ChEBI" id="CHEBI:49883"/>
        <label>2</label>
        <note>4Fe-4S-S-AdoMet</note>
    </ligand>
</feature>
<feature type="binding site" evidence="1">
    <location>
        <position position="152"/>
    </location>
    <ligand>
        <name>[4Fe-4S] cluster</name>
        <dbReference type="ChEBI" id="CHEBI:49883"/>
        <label>2</label>
        <note>4Fe-4S-S-AdoMet</note>
    </ligand>
</feature>
<feature type="binding site" evidence="1">
    <location>
        <position position="155"/>
    </location>
    <ligand>
        <name>[4Fe-4S] cluster</name>
        <dbReference type="ChEBI" id="CHEBI:49883"/>
        <label>2</label>
        <note>4Fe-4S-S-AdoMet</note>
    </ligand>
</feature>